<comment type="function">
    <text evidence="1">Part of the phosphoribosylformylglycinamidine synthase complex involved in the purines biosynthetic pathway. Catalyzes the ATP-dependent conversion of formylglycinamide ribonucleotide (FGAR) and glutamine to yield formylglycinamidine ribonucleotide (FGAM) and glutamate. The FGAM synthase complex is composed of three subunits. PurQ produces an ammonia molecule by converting glutamine to glutamate. PurL transfers the ammonia molecule to FGAR to form FGAM in an ATP-dependent manner. PurS interacts with PurQ and PurL and is thought to assist in the transfer of the ammonia molecule from PurQ to PurL.</text>
</comment>
<comment type="catalytic activity">
    <reaction evidence="1">
        <text>N(2)-formyl-N(1)-(5-phospho-beta-D-ribosyl)glycinamide + L-glutamine + ATP + H2O = 2-formamido-N(1)-(5-O-phospho-beta-D-ribosyl)acetamidine + L-glutamate + ADP + phosphate + H(+)</text>
        <dbReference type="Rhea" id="RHEA:17129"/>
        <dbReference type="ChEBI" id="CHEBI:15377"/>
        <dbReference type="ChEBI" id="CHEBI:15378"/>
        <dbReference type="ChEBI" id="CHEBI:29985"/>
        <dbReference type="ChEBI" id="CHEBI:30616"/>
        <dbReference type="ChEBI" id="CHEBI:43474"/>
        <dbReference type="ChEBI" id="CHEBI:58359"/>
        <dbReference type="ChEBI" id="CHEBI:147286"/>
        <dbReference type="ChEBI" id="CHEBI:147287"/>
        <dbReference type="ChEBI" id="CHEBI:456216"/>
        <dbReference type="EC" id="6.3.5.3"/>
    </reaction>
</comment>
<comment type="catalytic activity">
    <reaction evidence="1">
        <text>L-glutamine + H2O = L-glutamate + NH4(+)</text>
        <dbReference type="Rhea" id="RHEA:15889"/>
        <dbReference type="ChEBI" id="CHEBI:15377"/>
        <dbReference type="ChEBI" id="CHEBI:28938"/>
        <dbReference type="ChEBI" id="CHEBI:29985"/>
        <dbReference type="ChEBI" id="CHEBI:58359"/>
        <dbReference type="EC" id="3.5.1.2"/>
    </reaction>
</comment>
<comment type="pathway">
    <text evidence="1">Purine metabolism; IMP biosynthesis via de novo pathway; 5-amino-1-(5-phospho-D-ribosyl)imidazole from N(2)-formyl-N(1)-(5-phospho-D-ribosyl)glycinamide: step 1/2.</text>
</comment>
<comment type="subunit">
    <text evidence="1">Part of the FGAM synthase complex composed of 1 PurL, 1 PurQ and 2 PurS subunits.</text>
</comment>
<comment type="subcellular location">
    <subcellularLocation>
        <location evidence="1">Cytoplasm</location>
    </subcellularLocation>
</comment>
<feature type="chain" id="PRO_0000252722" description="Phosphoribosylformylglycinamidine synthase subunit PurQ">
    <location>
        <begin position="1"/>
        <end position="222"/>
    </location>
</feature>
<feature type="domain" description="Glutamine amidotransferase type-1" evidence="1">
    <location>
        <begin position="2"/>
        <end position="222"/>
    </location>
</feature>
<feature type="active site" description="Nucleophile" evidence="1">
    <location>
        <position position="86"/>
    </location>
</feature>
<feature type="active site" evidence="1">
    <location>
        <position position="194"/>
    </location>
</feature>
<feature type="active site" evidence="1">
    <location>
        <position position="196"/>
    </location>
</feature>
<dbReference type="EC" id="6.3.5.3" evidence="1"/>
<dbReference type="EC" id="3.5.1.2" evidence="1"/>
<dbReference type="EMBL" id="CP000143">
    <property type="protein sequence ID" value="ABA78282.1"/>
    <property type="molecule type" value="Genomic_DNA"/>
</dbReference>
<dbReference type="RefSeq" id="WP_002719283.1">
    <property type="nucleotide sequence ID" value="NZ_CP030271.1"/>
</dbReference>
<dbReference type="RefSeq" id="YP_352183.1">
    <property type="nucleotide sequence ID" value="NC_007493.2"/>
</dbReference>
<dbReference type="SMR" id="Q3J4K2"/>
<dbReference type="STRING" id="272943.RSP_2128"/>
<dbReference type="EnsemblBacteria" id="ABA78282">
    <property type="protein sequence ID" value="ABA78282"/>
    <property type="gene ID" value="RSP_2128"/>
</dbReference>
<dbReference type="GeneID" id="3719598"/>
<dbReference type="KEGG" id="rsp:RSP_2128"/>
<dbReference type="PATRIC" id="fig|272943.9.peg.1022"/>
<dbReference type="eggNOG" id="COG0047">
    <property type="taxonomic scope" value="Bacteria"/>
</dbReference>
<dbReference type="OrthoDB" id="9804441at2"/>
<dbReference type="PhylomeDB" id="Q3J4K2"/>
<dbReference type="UniPathway" id="UPA00074">
    <property type="reaction ID" value="UER00128"/>
</dbReference>
<dbReference type="Proteomes" id="UP000002703">
    <property type="component" value="Chromosome 1"/>
</dbReference>
<dbReference type="GO" id="GO:0005737">
    <property type="term" value="C:cytoplasm"/>
    <property type="evidence" value="ECO:0007669"/>
    <property type="project" value="UniProtKB-SubCell"/>
</dbReference>
<dbReference type="GO" id="GO:0005524">
    <property type="term" value="F:ATP binding"/>
    <property type="evidence" value="ECO:0007669"/>
    <property type="project" value="UniProtKB-KW"/>
</dbReference>
<dbReference type="GO" id="GO:0004359">
    <property type="term" value="F:glutaminase activity"/>
    <property type="evidence" value="ECO:0007669"/>
    <property type="project" value="UniProtKB-EC"/>
</dbReference>
<dbReference type="GO" id="GO:0004642">
    <property type="term" value="F:phosphoribosylformylglycinamidine synthase activity"/>
    <property type="evidence" value="ECO:0007669"/>
    <property type="project" value="UniProtKB-UniRule"/>
</dbReference>
<dbReference type="GO" id="GO:0006189">
    <property type="term" value="P:'de novo' IMP biosynthetic process"/>
    <property type="evidence" value="ECO:0007669"/>
    <property type="project" value="UniProtKB-UniRule"/>
</dbReference>
<dbReference type="CDD" id="cd01740">
    <property type="entry name" value="GATase1_FGAR_AT"/>
    <property type="match status" value="1"/>
</dbReference>
<dbReference type="Gene3D" id="3.40.50.880">
    <property type="match status" value="1"/>
</dbReference>
<dbReference type="HAMAP" id="MF_00421">
    <property type="entry name" value="PurQ"/>
    <property type="match status" value="1"/>
</dbReference>
<dbReference type="InterPro" id="IPR029062">
    <property type="entry name" value="Class_I_gatase-like"/>
</dbReference>
<dbReference type="InterPro" id="IPR010075">
    <property type="entry name" value="PRibForGlyAmidine_synth_PurQ"/>
</dbReference>
<dbReference type="NCBIfam" id="TIGR01737">
    <property type="entry name" value="FGAM_synth_I"/>
    <property type="match status" value="1"/>
</dbReference>
<dbReference type="NCBIfam" id="NF002957">
    <property type="entry name" value="PRK03619.1"/>
    <property type="match status" value="1"/>
</dbReference>
<dbReference type="PANTHER" id="PTHR47552">
    <property type="entry name" value="PHOSPHORIBOSYLFORMYLGLYCINAMIDINE SYNTHASE SUBUNIT PURQ"/>
    <property type="match status" value="1"/>
</dbReference>
<dbReference type="PANTHER" id="PTHR47552:SF1">
    <property type="entry name" value="PHOSPHORIBOSYLFORMYLGLYCINAMIDINE SYNTHASE SUBUNIT PURQ"/>
    <property type="match status" value="1"/>
</dbReference>
<dbReference type="Pfam" id="PF13507">
    <property type="entry name" value="GATase_5"/>
    <property type="match status" value="1"/>
</dbReference>
<dbReference type="PIRSF" id="PIRSF001586">
    <property type="entry name" value="FGAM_synth_I"/>
    <property type="match status" value="1"/>
</dbReference>
<dbReference type="SMART" id="SM01211">
    <property type="entry name" value="GATase_5"/>
    <property type="match status" value="1"/>
</dbReference>
<dbReference type="SUPFAM" id="SSF52317">
    <property type="entry name" value="Class I glutamine amidotransferase-like"/>
    <property type="match status" value="1"/>
</dbReference>
<dbReference type="PROSITE" id="PS51273">
    <property type="entry name" value="GATASE_TYPE_1"/>
    <property type="match status" value="1"/>
</dbReference>
<gene>
    <name evidence="1" type="primary">purQ</name>
    <name type="ordered locus">RHOS4_07140</name>
    <name type="ordered locus">RSP_2128</name>
</gene>
<protein>
    <recommendedName>
        <fullName evidence="1">Phosphoribosylformylglycinamidine synthase subunit PurQ</fullName>
        <shortName evidence="1">FGAM synthase</shortName>
        <ecNumber evidence="1">6.3.5.3</ecNumber>
    </recommendedName>
    <alternativeName>
        <fullName evidence="1">Formylglycinamide ribonucleotide amidotransferase subunit I</fullName>
        <shortName evidence="1">FGAR amidotransferase I</shortName>
        <shortName evidence="1">FGAR-AT I</shortName>
    </alternativeName>
    <alternativeName>
        <fullName evidence="1">Glutaminase PurQ</fullName>
        <ecNumber evidence="1">3.5.1.2</ecNumber>
    </alternativeName>
    <alternativeName>
        <fullName evidence="1">Phosphoribosylformylglycinamidine synthase subunit I</fullName>
    </alternativeName>
</protein>
<evidence type="ECO:0000255" key="1">
    <source>
        <dbReference type="HAMAP-Rule" id="MF_00421"/>
    </source>
</evidence>
<organism>
    <name type="scientific">Cereibacter sphaeroides (strain ATCC 17023 / DSM 158 / JCM 6121 / CCUG 31486 / LMG 2827 / NBRC 12203 / NCIMB 8253 / ATH 2.4.1.)</name>
    <name type="common">Rhodobacter sphaeroides</name>
    <dbReference type="NCBI Taxonomy" id="272943"/>
    <lineage>
        <taxon>Bacteria</taxon>
        <taxon>Pseudomonadati</taxon>
        <taxon>Pseudomonadota</taxon>
        <taxon>Alphaproteobacteria</taxon>
        <taxon>Rhodobacterales</taxon>
        <taxon>Paracoccaceae</taxon>
        <taxon>Cereibacter</taxon>
    </lineage>
</organism>
<proteinExistence type="inferred from homology"/>
<sequence>MKAAVITFPGSNCDRDLATAFEKAGADVTRVWHKDTALPEGVDVVGVPGGFSFGDYLRCGAIAARSPIAAAMIRHAERGGYVLGICNGFQVLTETGLLPGALMRNAGLKFICRRVDLRVATADSAFTSGWAAGDAVRFPIAHHDGNYTADPETLARLRGEDRVAFTYLDNPNGSMEDIAGILSANRRVLGLMPHPERAVEEAQGGADGMGLFRALLGGMALV</sequence>
<accession>Q3J4K2</accession>
<keyword id="KW-0067">ATP-binding</keyword>
<keyword id="KW-0963">Cytoplasm</keyword>
<keyword id="KW-0315">Glutamine amidotransferase</keyword>
<keyword id="KW-0378">Hydrolase</keyword>
<keyword id="KW-0436">Ligase</keyword>
<keyword id="KW-0547">Nucleotide-binding</keyword>
<keyword id="KW-0658">Purine biosynthesis</keyword>
<keyword id="KW-1185">Reference proteome</keyword>
<name>PURQ_CERS4</name>
<reference key="1">
    <citation type="submission" date="2005-09" db="EMBL/GenBank/DDBJ databases">
        <title>Complete sequence of chromosome 1 of Rhodobacter sphaeroides 2.4.1.</title>
        <authorList>
            <person name="Copeland A."/>
            <person name="Lucas S."/>
            <person name="Lapidus A."/>
            <person name="Barry K."/>
            <person name="Detter J.C."/>
            <person name="Glavina T."/>
            <person name="Hammon N."/>
            <person name="Israni S."/>
            <person name="Pitluck S."/>
            <person name="Richardson P."/>
            <person name="Mackenzie C."/>
            <person name="Choudhary M."/>
            <person name="Larimer F."/>
            <person name="Hauser L.J."/>
            <person name="Land M."/>
            <person name="Donohue T.J."/>
            <person name="Kaplan S."/>
        </authorList>
    </citation>
    <scope>NUCLEOTIDE SEQUENCE [LARGE SCALE GENOMIC DNA]</scope>
    <source>
        <strain>ATCC 17023 / DSM 158 / JCM 6121 / CCUG 31486 / LMG 2827 / NBRC 12203 / NCIMB 8253 / ATH 2.4.1.</strain>
    </source>
</reference>